<keyword id="KW-0030">Aminoacyl-tRNA synthetase</keyword>
<keyword id="KW-0067">ATP-binding</keyword>
<keyword id="KW-0963">Cytoplasm</keyword>
<keyword id="KW-0436">Ligase</keyword>
<keyword id="KW-0547">Nucleotide-binding</keyword>
<keyword id="KW-0648">Protein biosynthesis</keyword>
<evidence type="ECO:0000255" key="1">
    <source>
        <dbReference type="HAMAP-Rule" id="MF_01569"/>
    </source>
</evidence>
<dbReference type="EC" id="6.1.1.15" evidence="1"/>
<dbReference type="EMBL" id="CP001358">
    <property type="protein sequence ID" value="ACL48858.1"/>
    <property type="molecule type" value="Genomic_DNA"/>
</dbReference>
<dbReference type="SMR" id="B8IZD1"/>
<dbReference type="STRING" id="525146.Ddes_0951"/>
<dbReference type="KEGG" id="dds:Ddes_0951"/>
<dbReference type="eggNOG" id="COG0442">
    <property type="taxonomic scope" value="Bacteria"/>
</dbReference>
<dbReference type="HOGENOM" id="CLU_016739_0_0_7"/>
<dbReference type="GO" id="GO:0005829">
    <property type="term" value="C:cytosol"/>
    <property type="evidence" value="ECO:0007669"/>
    <property type="project" value="TreeGrafter"/>
</dbReference>
<dbReference type="GO" id="GO:0002161">
    <property type="term" value="F:aminoacyl-tRNA deacylase activity"/>
    <property type="evidence" value="ECO:0007669"/>
    <property type="project" value="InterPro"/>
</dbReference>
<dbReference type="GO" id="GO:0005524">
    <property type="term" value="F:ATP binding"/>
    <property type="evidence" value="ECO:0007669"/>
    <property type="project" value="UniProtKB-UniRule"/>
</dbReference>
<dbReference type="GO" id="GO:0004827">
    <property type="term" value="F:proline-tRNA ligase activity"/>
    <property type="evidence" value="ECO:0007669"/>
    <property type="project" value="UniProtKB-UniRule"/>
</dbReference>
<dbReference type="GO" id="GO:0006433">
    <property type="term" value="P:prolyl-tRNA aminoacylation"/>
    <property type="evidence" value="ECO:0007669"/>
    <property type="project" value="UniProtKB-UniRule"/>
</dbReference>
<dbReference type="CDD" id="cd04334">
    <property type="entry name" value="ProRS-INS"/>
    <property type="match status" value="1"/>
</dbReference>
<dbReference type="CDD" id="cd00861">
    <property type="entry name" value="ProRS_anticodon_short"/>
    <property type="match status" value="1"/>
</dbReference>
<dbReference type="CDD" id="cd00779">
    <property type="entry name" value="ProRS_core_prok"/>
    <property type="match status" value="1"/>
</dbReference>
<dbReference type="FunFam" id="3.30.930.10:FF:000065">
    <property type="entry name" value="Proline--tRNA ligase"/>
    <property type="match status" value="1"/>
</dbReference>
<dbReference type="FunFam" id="3.30.930.10:FF:000066">
    <property type="entry name" value="Proline--tRNA ligase"/>
    <property type="match status" value="1"/>
</dbReference>
<dbReference type="Gene3D" id="3.40.50.800">
    <property type="entry name" value="Anticodon-binding domain"/>
    <property type="match status" value="1"/>
</dbReference>
<dbReference type="Gene3D" id="3.30.930.10">
    <property type="entry name" value="Bira Bifunctional Protein, Domain 2"/>
    <property type="match status" value="2"/>
</dbReference>
<dbReference type="Gene3D" id="3.90.960.10">
    <property type="entry name" value="YbaK/aminoacyl-tRNA synthetase-associated domain"/>
    <property type="match status" value="1"/>
</dbReference>
<dbReference type="HAMAP" id="MF_01569">
    <property type="entry name" value="Pro_tRNA_synth_type1"/>
    <property type="match status" value="1"/>
</dbReference>
<dbReference type="InterPro" id="IPR002314">
    <property type="entry name" value="aa-tRNA-synt_IIb"/>
</dbReference>
<dbReference type="InterPro" id="IPR006195">
    <property type="entry name" value="aa-tRNA-synth_II"/>
</dbReference>
<dbReference type="InterPro" id="IPR045864">
    <property type="entry name" value="aa-tRNA-synth_II/BPL/LPL"/>
</dbReference>
<dbReference type="InterPro" id="IPR004154">
    <property type="entry name" value="Anticodon-bd"/>
</dbReference>
<dbReference type="InterPro" id="IPR036621">
    <property type="entry name" value="Anticodon-bd_dom_sf"/>
</dbReference>
<dbReference type="InterPro" id="IPR002316">
    <property type="entry name" value="Pro-tRNA-ligase_IIa"/>
</dbReference>
<dbReference type="InterPro" id="IPR004500">
    <property type="entry name" value="Pro-tRNA-synth_IIa_bac-type"/>
</dbReference>
<dbReference type="InterPro" id="IPR023717">
    <property type="entry name" value="Pro-tRNA-Synthase_IIa_type1"/>
</dbReference>
<dbReference type="InterPro" id="IPR050062">
    <property type="entry name" value="Pro-tRNA_synthetase"/>
</dbReference>
<dbReference type="InterPro" id="IPR044140">
    <property type="entry name" value="ProRS_anticodon_short"/>
</dbReference>
<dbReference type="InterPro" id="IPR033730">
    <property type="entry name" value="ProRS_core_prok"/>
</dbReference>
<dbReference type="InterPro" id="IPR036754">
    <property type="entry name" value="YbaK/aa-tRNA-synt-asso_dom_sf"/>
</dbReference>
<dbReference type="InterPro" id="IPR007214">
    <property type="entry name" value="YbaK/aa-tRNA-synth-assoc-dom"/>
</dbReference>
<dbReference type="NCBIfam" id="NF006625">
    <property type="entry name" value="PRK09194.1"/>
    <property type="match status" value="1"/>
</dbReference>
<dbReference type="NCBIfam" id="TIGR00409">
    <property type="entry name" value="proS_fam_II"/>
    <property type="match status" value="1"/>
</dbReference>
<dbReference type="PANTHER" id="PTHR42753">
    <property type="entry name" value="MITOCHONDRIAL RIBOSOME PROTEIN L39/PROLYL-TRNA LIGASE FAMILY MEMBER"/>
    <property type="match status" value="1"/>
</dbReference>
<dbReference type="PANTHER" id="PTHR42753:SF2">
    <property type="entry name" value="PROLINE--TRNA LIGASE"/>
    <property type="match status" value="1"/>
</dbReference>
<dbReference type="Pfam" id="PF03129">
    <property type="entry name" value="HGTP_anticodon"/>
    <property type="match status" value="1"/>
</dbReference>
<dbReference type="Pfam" id="PF00587">
    <property type="entry name" value="tRNA-synt_2b"/>
    <property type="match status" value="1"/>
</dbReference>
<dbReference type="Pfam" id="PF04073">
    <property type="entry name" value="tRNA_edit"/>
    <property type="match status" value="1"/>
</dbReference>
<dbReference type="PIRSF" id="PIRSF001535">
    <property type="entry name" value="ProRS_1"/>
    <property type="match status" value="1"/>
</dbReference>
<dbReference type="PRINTS" id="PR01046">
    <property type="entry name" value="TRNASYNTHPRO"/>
</dbReference>
<dbReference type="SUPFAM" id="SSF52954">
    <property type="entry name" value="Class II aaRS ABD-related"/>
    <property type="match status" value="1"/>
</dbReference>
<dbReference type="SUPFAM" id="SSF55681">
    <property type="entry name" value="Class II aaRS and biotin synthetases"/>
    <property type="match status" value="1"/>
</dbReference>
<dbReference type="SUPFAM" id="SSF55826">
    <property type="entry name" value="YbaK/ProRS associated domain"/>
    <property type="match status" value="1"/>
</dbReference>
<dbReference type="PROSITE" id="PS50862">
    <property type="entry name" value="AA_TRNA_LIGASE_II"/>
    <property type="match status" value="1"/>
</dbReference>
<name>SYP_DESDA</name>
<gene>
    <name evidence="1" type="primary">proS</name>
    <name type="ordered locus">Ddes_0951</name>
</gene>
<comment type="function">
    <text evidence="1">Catalyzes the attachment of proline to tRNA(Pro) in a two-step reaction: proline is first activated by ATP to form Pro-AMP and then transferred to the acceptor end of tRNA(Pro). As ProRS can inadvertently accommodate and process non-cognate amino acids such as alanine and cysteine, to avoid such errors it has two additional distinct editing activities against alanine. One activity is designated as 'pretransfer' editing and involves the tRNA(Pro)-independent hydrolysis of activated Ala-AMP. The other activity is designated 'posttransfer' editing and involves deacylation of mischarged Ala-tRNA(Pro). The misacylated Cys-tRNA(Pro) is not edited by ProRS.</text>
</comment>
<comment type="catalytic activity">
    <reaction evidence="1">
        <text>tRNA(Pro) + L-proline + ATP = L-prolyl-tRNA(Pro) + AMP + diphosphate</text>
        <dbReference type="Rhea" id="RHEA:14305"/>
        <dbReference type="Rhea" id="RHEA-COMP:9700"/>
        <dbReference type="Rhea" id="RHEA-COMP:9702"/>
        <dbReference type="ChEBI" id="CHEBI:30616"/>
        <dbReference type="ChEBI" id="CHEBI:33019"/>
        <dbReference type="ChEBI" id="CHEBI:60039"/>
        <dbReference type="ChEBI" id="CHEBI:78442"/>
        <dbReference type="ChEBI" id="CHEBI:78532"/>
        <dbReference type="ChEBI" id="CHEBI:456215"/>
        <dbReference type="EC" id="6.1.1.15"/>
    </reaction>
</comment>
<comment type="subunit">
    <text evidence="1">Homodimer.</text>
</comment>
<comment type="subcellular location">
    <subcellularLocation>
        <location evidence="1">Cytoplasm</location>
    </subcellularLocation>
</comment>
<comment type="domain">
    <text evidence="1">Consists of three domains: the N-terminal catalytic domain, the editing domain and the C-terminal anticodon-binding domain.</text>
</comment>
<comment type="similarity">
    <text evidence="1">Belongs to the class-II aminoacyl-tRNA synthetase family. ProS type 1 subfamily.</text>
</comment>
<organism>
    <name type="scientific">Desulfovibrio desulfuricans (strain ATCC 27774 / DSM 6949 / MB)</name>
    <dbReference type="NCBI Taxonomy" id="525146"/>
    <lineage>
        <taxon>Bacteria</taxon>
        <taxon>Pseudomonadati</taxon>
        <taxon>Thermodesulfobacteriota</taxon>
        <taxon>Desulfovibrionia</taxon>
        <taxon>Desulfovibrionales</taxon>
        <taxon>Desulfovibrionaceae</taxon>
        <taxon>Desulfovibrio</taxon>
    </lineage>
</organism>
<protein>
    <recommendedName>
        <fullName evidence="1">Proline--tRNA ligase</fullName>
        <ecNumber evidence="1">6.1.1.15</ecNumber>
    </recommendedName>
    <alternativeName>
        <fullName evidence="1">Prolyl-tRNA synthetase</fullName>
        <shortName evidence="1">ProRS</shortName>
    </alternativeName>
</protein>
<proteinExistence type="inferred from homology"/>
<reference key="1">
    <citation type="submission" date="2009-01" db="EMBL/GenBank/DDBJ databases">
        <title>Complete sequence of Desulfovibrio desulfuricans subsp. desulfuricans str. ATCC 27774.</title>
        <authorList>
            <consortium name="US DOE Joint Genome Institute"/>
            <person name="Lucas S."/>
            <person name="Copeland A."/>
            <person name="Lapidus A."/>
            <person name="Glavina del Rio T."/>
            <person name="Tice H."/>
            <person name="Bruce D."/>
            <person name="Goodwin L."/>
            <person name="Pitluck S."/>
            <person name="Sims D."/>
            <person name="Lu M."/>
            <person name="Kiss H."/>
            <person name="Meineke L."/>
            <person name="Brettin T."/>
            <person name="Detter J.C."/>
            <person name="Han C."/>
            <person name="Larimer F."/>
            <person name="Land M."/>
            <person name="Hauser L."/>
            <person name="Kyrpides N."/>
            <person name="Ovchinnikova G."/>
            <person name="Hazen T.C."/>
        </authorList>
    </citation>
    <scope>NUCLEOTIDE SEQUENCE [LARGE SCALE GENOMIC DNA]</scope>
    <source>
        <strain>ATCC 27774 / DSM 6949 / MB</strain>
    </source>
</reference>
<sequence>MRFSSCYIPTLKESPADAEVISHKLLLRAGMVRRLTSGLYIYLPLGLRVINKIARTVREEMEKAGFRELLMPMVQPGDLWKETGRWEHYGKELLRFKDRNEREYCLGPTHEEVITDLVRGEVRSYRQLPVRLYQVQTKFRDEIRPRFGLMRGREFMMKDGYSFDATAEGAEESYKIMYDAYMSIFSRLGLRFRAVEADTGSIGGNFSHEFMVLADTGEDTIAFCHDCEYAANVERAEVAWRGSPSTGGCPAMEKIATPGAHSVEELTALLGVPASAIVKTMLFKVDGKTVAVLVRGDREVNDIKLKNLLKAQEVELADAATVQAVTAAPVGFAGPVALDVPVYADAELQGGTDYVVGANAADAHLKHVDLARDAAVTAWADLRAITADDQCPRCGGRMELTRGIEVGHIFMLGLKYSEAMHAVFLDENGKERTMIMGCYGIGVSRVAAAAIEQNHDEHGIVFPPPVAPFECVLLNLDPRSEEVNAKVEEIYALLQGMGIEVLLDDREERPGVKFKDADLLGIPMQLVVGGKGLGRGIVECKDRRTGEKGELSAASLEQDFAAWSEKVRQGWASR</sequence>
<feature type="chain" id="PRO_1000185496" description="Proline--tRNA ligase">
    <location>
        <begin position="1"/>
        <end position="574"/>
    </location>
</feature>
<accession>B8IZD1</accession>